<accession>A7ZKU1</accession>
<dbReference type="EMBL" id="CP000800">
    <property type="protein sequence ID" value="ABV17943.1"/>
    <property type="molecule type" value="Genomic_DNA"/>
</dbReference>
<dbReference type="RefSeq" id="WP_000726974.1">
    <property type="nucleotide sequence ID" value="NC_009801.1"/>
</dbReference>
<dbReference type="KEGG" id="ecw:EcE24377A_1314"/>
<dbReference type="HOGENOM" id="CLU_164687_0_0_6"/>
<dbReference type="Proteomes" id="UP000001122">
    <property type="component" value="Chromosome"/>
</dbReference>
<dbReference type="HAMAP" id="MF_01455">
    <property type="entry name" value="UPF0757"/>
    <property type="match status" value="1"/>
</dbReference>
<dbReference type="InterPro" id="IPR025693">
    <property type="entry name" value="Gly-zipper_OmpA-like_dom"/>
</dbReference>
<dbReference type="InterPro" id="IPR027367">
    <property type="entry name" value="Gly-zipper_YMGG"/>
</dbReference>
<dbReference type="InterPro" id="IPR022833">
    <property type="entry name" value="UPF0757_YmgG"/>
</dbReference>
<dbReference type="Pfam" id="PF13436">
    <property type="entry name" value="Gly-zipper_OmpA"/>
    <property type="match status" value="1"/>
</dbReference>
<dbReference type="Pfam" id="PF13441">
    <property type="entry name" value="Gly-zipper_YMGG"/>
    <property type="match status" value="1"/>
</dbReference>
<organism>
    <name type="scientific">Escherichia coli O139:H28 (strain E24377A / ETEC)</name>
    <dbReference type="NCBI Taxonomy" id="331111"/>
    <lineage>
        <taxon>Bacteria</taxon>
        <taxon>Pseudomonadati</taxon>
        <taxon>Pseudomonadota</taxon>
        <taxon>Gammaproteobacteria</taxon>
        <taxon>Enterobacterales</taxon>
        <taxon>Enterobacteriaceae</taxon>
        <taxon>Escherichia</taxon>
    </lineage>
</organism>
<gene>
    <name evidence="1" type="primary">ymgG</name>
    <name type="ordered locus">EcE24377A_1314</name>
</gene>
<protein>
    <recommendedName>
        <fullName evidence="1">UPF0757 protein YmgG</fullName>
    </recommendedName>
</protein>
<sequence length="114" mass="10807">MKKKILAFGLISALFCSTPAMADMNRTTKGALLGAGVGLLTGNGVNGVLKGAAVGAGVGAVTEKGRDGKNARKGAKVGAAVGAVTGVLTGNGLEGAIKGAVIGGTGGAILGKMK</sequence>
<feature type="chain" id="PRO_0000388955" description="UPF0757 protein YmgG">
    <location>
        <begin position="1"/>
        <end position="114"/>
    </location>
</feature>
<proteinExistence type="inferred from homology"/>
<evidence type="ECO:0000255" key="1">
    <source>
        <dbReference type="HAMAP-Rule" id="MF_01455"/>
    </source>
</evidence>
<keyword id="KW-1185">Reference proteome</keyword>
<reference key="1">
    <citation type="journal article" date="2008" name="J. Bacteriol.">
        <title>The pangenome structure of Escherichia coli: comparative genomic analysis of E. coli commensal and pathogenic isolates.</title>
        <authorList>
            <person name="Rasko D.A."/>
            <person name="Rosovitz M.J."/>
            <person name="Myers G.S.A."/>
            <person name="Mongodin E.F."/>
            <person name="Fricke W.F."/>
            <person name="Gajer P."/>
            <person name="Crabtree J."/>
            <person name="Sebaihia M."/>
            <person name="Thomson N.R."/>
            <person name="Chaudhuri R."/>
            <person name="Henderson I.R."/>
            <person name="Sperandio V."/>
            <person name="Ravel J."/>
        </authorList>
    </citation>
    <scope>NUCLEOTIDE SEQUENCE [LARGE SCALE GENOMIC DNA]</scope>
    <source>
        <strain>E24377A / ETEC</strain>
    </source>
</reference>
<name>YMGG_ECO24</name>
<comment type="similarity">
    <text evidence="1">Belongs to the UPF0757 family.</text>
</comment>